<keyword id="KW-0489">Methyltransferase</keyword>
<keyword id="KW-0949">S-adenosyl-L-methionine</keyword>
<keyword id="KW-0808">Transferase</keyword>
<keyword id="KW-0819">tRNA processing</keyword>
<sequence>MRLRNIPDALERIQNQNLLVKTPWNIDDSWIIEIGMGKGKMISQLAFDNPNKNFLGVEKYPSAAVKAIKYVKKYNLSNFFILISDAKDLLDRIKGKASTIWLTFPDPWPKNRHYKRRLTYKDFLEIYANLLVKDGILKLKTDNLKFFEFSIESLKENGWKITYQTNDLHNSLVNSSNIKTTYEEKWVNLNYKIHYLEAIFI</sequence>
<accession>Q4A9M3</accession>
<name>TRMB_MESHJ</name>
<feature type="chain" id="PRO_0000229175" description="tRNA (guanine-N(7)-)-methyltransferase">
    <location>
        <begin position="1"/>
        <end position="201"/>
    </location>
</feature>
<feature type="active site" evidence="1">
    <location>
        <position position="106"/>
    </location>
</feature>
<feature type="binding site" evidence="2">
    <location>
        <position position="33"/>
    </location>
    <ligand>
        <name>S-adenosyl-L-methionine</name>
        <dbReference type="ChEBI" id="CHEBI:59789"/>
    </ligand>
</feature>
<feature type="binding site" evidence="2">
    <location>
        <position position="58"/>
    </location>
    <ligand>
        <name>S-adenosyl-L-methionine</name>
        <dbReference type="ChEBI" id="CHEBI:59789"/>
    </ligand>
</feature>
<feature type="binding site" evidence="2">
    <location>
        <position position="85"/>
    </location>
    <ligand>
        <name>S-adenosyl-L-methionine</name>
        <dbReference type="ChEBI" id="CHEBI:59789"/>
    </ligand>
</feature>
<feature type="binding site" evidence="2">
    <location>
        <position position="106"/>
    </location>
    <ligand>
        <name>S-adenosyl-L-methionine</name>
        <dbReference type="ChEBI" id="CHEBI:59789"/>
    </ligand>
</feature>
<feature type="binding site" evidence="2">
    <location>
        <position position="110"/>
    </location>
    <ligand>
        <name>substrate</name>
    </ligand>
</feature>
<feature type="binding site" evidence="2">
    <location>
        <position position="142"/>
    </location>
    <ligand>
        <name>substrate</name>
    </ligand>
</feature>
<feature type="binding site" evidence="2">
    <location>
        <begin position="180"/>
        <end position="183"/>
    </location>
    <ligand>
        <name>substrate</name>
    </ligand>
</feature>
<comment type="function">
    <text evidence="2">Catalyzes the formation of N(7)-methylguanine at position 46 (m7G46) in tRNA.</text>
</comment>
<comment type="catalytic activity">
    <reaction evidence="2">
        <text>guanosine(46) in tRNA + S-adenosyl-L-methionine = N(7)-methylguanosine(46) in tRNA + S-adenosyl-L-homocysteine</text>
        <dbReference type="Rhea" id="RHEA:42708"/>
        <dbReference type="Rhea" id="RHEA-COMP:10188"/>
        <dbReference type="Rhea" id="RHEA-COMP:10189"/>
        <dbReference type="ChEBI" id="CHEBI:57856"/>
        <dbReference type="ChEBI" id="CHEBI:59789"/>
        <dbReference type="ChEBI" id="CHEBI:74269"/>
        <dbReference type="ChEBI" id="CHEBI:74480"/>
        <dbReference type="EC" id="2.1.1.33"/>
    </reaction>
</comment>
<comment type="pathway">
    <text evidence="2">tRNA modification; N(7)-methylguanine-tRNA biosynthesis.</text>
</comment>
<comment type="similarity">
    <text evidence="2">Belongs to the class I-like SAM-binding methyltransferase superfamily. TrmB family.</text>
</comment>
<protein>
    <recommendedName>
        <fullName evidence="2">tRNA (guanine-N(7)-)-methyltransferase</fullName>
        <ecNumber evidence="2">2.1.1.33</ecNumber>
    </recommendedName>
    <alternativeName>
        <fullName evidence="2">tRNA (guanine(46)-N(7))-methyltransferase</fullName>
    </alternativeName>
    <alternativeName>
        <fullName evidence="2">tRNA(m7G46)-methyltransferase</fullName>
    </alternativeName>
</protein>
<proteinExistence type="inferred from homology"/>
<reference key="1">
    <citation type="journal article" date="2005" name="J. Bacteriol.">
        <title>Swine and poultry pathogens: the complete genome sequences of two strains of Mycoplasma hyopneumoniae and a strain of Mycoplasma synoviae.</title>
        <authorList>
            <person name="Vasconcelos A.T.R."/>
            <person name="Ferreira H.B."/>
            <person name="Bizarro C.V."/>
            <person name="Bonatto S.L."/>
            <person name="Carvalho M.O."/>
            <person name="Pinto P.M."/>
            <person name="Almeida D.F."/>
            <person name="Almeida L.G.P."/>
            <person name="Almeida R."/>
            <person name="Alves-Junior L."/>
            <person name="Assuncao E.N."/>
            <person name="Azevedo V.A.C."/>
            <person name="Bogo M.R."/>
            <person name="Brigido M.M."/>
            <person name="Brocchi M."/>
            <person name="Burity H.A."/>
            <person name="Camargo A.A."/>
            <person name="Camargo S.S."/>
            <person name="Carepo M.S."/>
            <person name="Carraro D.M."/>
            <person name="de Mattos Cascardo J.C."/>
            <person name="Castro L.A."/>
            <person name="Cavalcanti G."/>
            <person name="Chemale G."/>
            <person name="Collevatti R.G."/>
            <person name="Cunha C.W."/>
            <person name="Dallagiovanna B."/>
            <person name="Dambros B.P."/>
            <person name="Dellagostin O.A."/>
            <person name="Falcao C."/>
            <person name="Fantinatti-Garboggini F."/>
            <person name="Felipe M.S.S."/>
            <person name="Fiorentin L."/>
            <person name="Franco G.R."/>
            <person name="Freitas N.S.A."/>
            <person name="Frias D."/>
            <person name="Grangeiro T.B."/>
            <person name="Grisard E.C."/>
            <person name="Guimaraes C.T."/>
            <person name="Hungria M."/>
            <person name="Jardim S.N."/>
            <person name="Krieger M.A."/>
            <person name="Laurino J.P."/>
            <person name="Lima L.F.A."/>
            <person name="Lopes M.I."/>
            <person name="Loreto E.L.S."/>
            <person name="Madeira H.M.F."/>
            <person name="Manfio G.P."/>
            <person name="Maranhao A.Q."/>
            <person name="Martinkovics C.T."/>
            <person name="Medeiros S.R.B."/>
            <person name="Moreira M.A.M."/>
            <person name="Neiva M."/>
            <person name="Ramalho-Neto C.E."/>
            <person name="Nicolas M.F."/>
            <person name="Oliveira S.C."/>
            <person name="Paixao R.F.C."/>
            <person name="Pedrosa F.O."/>
            <person name="Pena S.D.J."/>
            <person name="Pereira M."/>
            <person name="Pereira-Ferrari L."/>
            <person name="Piffer I."/>
            <person name="Pinto L.S."/>
            <person name="Potrich D.P."/>
            <person name="Salim A.C.M."/>
            <person name="Santos F.R."/>
            <person name="Schmitt R."/>
            <person name="Schneider M.P.C."/>
            <person name="Schrank A."/>
            <person name="Schrank I.S."/>
            <person name="Schuck A.F."/>
            <person name="Seuanez H.N."/>
            <person name="Silva D.W."/>
            <person name="Silva R."/>
            <person name="Silva S.C."/>
            <person name="Soares C.M.A."/>
            <person name="Souza K.R.L."/>
            <person name="Souza R.C."/>
            <person name="Staats C.C."/>
            <person name="Steffens M.B.R."/>
            <person name="Teixeira S.M.R."/>
            <person name="Urmenyi T.P."/>
            <person name="Vainstein M.H."/>
            <person name="Zuccherato L.W."/>
            <person name="Simpson A.J.G."/>
            <person name="Zaha A."/>
        </authorList>
    </citation>
    <scope>NUCLEOTIDE SEQUENCE [LARGE SCALE GENOMIC DNA]</scope>
    <source>
        <strain>J / ATCC 25934 / NCTC 10110</strain>
    </source>
</reference>
<evidence type="ECO:0000250" key="1"/>
<evidence type="ECO:0000255" key="2">
    <source>
        <dbReference type="HAMAP-Rule" id="MF_01057"/>
    </source>
</evidence>
<organism>
    <name type="scientific">Mesomycoplasma hyopneumoniae (strain J / ATCC 25934 / NCTC 10110)</name>
    <name type="common">Mycoplasma hyopneumoniae</name>
    <dbReference type="NCBI Taxonomy" id="262719"/>
    <lineage>
        <taxon>Bacteria</taxon>
        <taxon>Bacillati</taxon>
        <taxon>Mycoplasmatota</taxon>
        <taxon>Mycoplasmoidales</taxon>
        <taxon>Metamycoplasmataceae</taxon>
        <taxon>Mesomycoplasma</taxon>
    </lineage>
</organism>
<gene>
    <name evidence="2" type="primary">trmB</name>
    <name type="ordered locus">MHJ_0462</name>
</gene>
<dbReference type="EC" id="2.1.1.33" evidence="2"/>
<dbReference type="EMBL" id="AE017243">
    <property type="protein sequence ID" value="AAZ44548.1"/>
    <property type="molecule type" value="Genomic_DNA"/>
</dbReference>
<dbReference type="RefSeq" id="WP_011284216.1">
    <property type="nucleotide sequence ID" value="NC_007295.1"/>
</dbReference>
<dbReference type="SMR" id="Q4A9M3"/>
<dbReference type="GeneID" id="41334763"/>
<dbReference type="KEGG" id="mhj:MHJ_0462"/>
<dbReference type="eggNOG" id="COG0220">
    <property type="taxonomic scope" value="Bacteria"/>
</dbReference>
<dbReference type="HOGENOM" id="CLU_050910_2_1_14"/>
<dbReference type="OrthoDB" id="9802090at2"/>
<dbReference type="UniPathway" id="UPA00989"/>
<dbReference type="Proteomes" id="UP000000548">
    <property type="component" value="Chromosome"/>
</dbReference>
<dbReference type="GO" id="GO:0043527">
    <property type="term" value="C:tRNA methyltransferase complex"/>
    <property type="evidence" value="ECO:0007669"/>
    <property type="project" value="TreeGrafter"/>
</dbReference>
<dbReference type="GO" id="GO:0008176">
    <property type="term" value="F:tRNA (guanine(46)-N7)-methyltransferase activity"/>
    <property type="evidence" value="ECO:0007669"/>
    <property type="project" value="UniProtKB-UniRule"/>
</dbReference>
<dbReference type="CDD" id="cd02440">
    <property type="entry name" value="AdoMet_MTases"/>
    <property type="match status" value="1"/>
</dbReference>
<dbReference type="Gene3D" id="3.40.50.150">
    <property type="entry name" value="Vaccinia Virus protein VP39"/>
    <property type="match status" value="1"/>
</dbReference>
<dbReference type="HAMAP" id="MF_01057">
    <property type="entry name" value="tRNA_methyltr_TrmB"/>
    <property type="match status" value="1"/>
</dbReference>
<dbReference type="InterPro" id="IPR029063">
    <property type="entry name" value="SAM-dependent_MTases_sf"/>
</dbReference>
<dbReference type="InterPro" id="IPR003358">
    <property type="entry name" value="tRNA_(Gua-N-7)_MeTrfase_Trmb"/>
</dbReference>
<dbReference type="InterPro" id="IPR055361">
    <property type="entry name" value="tRNA_methyltr_TrmB_bact"/>
</dbReference>
<dbReference type="NCBIfam" id="NF001080">
    <property type="entry name" value="PRK00121.2-2"/>
    <property type="match status" value="1"/>
</dbReference>
<dbReference type="NCBIfam" id="TIGR00091">
    <property type="entry name" value="tRNA (guanosine(46)-N7)-methyltransferase TrmB"/>
    <property type="match status" value="1"/>
</dbReference>
<dbReference type="PANTHER" id="PTHR23417">
    <property type="entry name" value="3-DEOXY-D-MANNO-OCTULOSONIC-ACID TRANSFERASE/TRNA GUANINE-N 7 - -METHYLTRANSFERASE"/>
    <property type="match status" value="1"/>
</dbReference>
<dbReference type="PANTHER" id="PTHR23417:SF14">
    <property type="entry name" value="PENTACOTRIPEPTIDE-REPEAT REGION OF PRORP DOMAIN-CONTAINING PROTEIN"/>
    <property type="match status" value="1"/>
</dbReference>
<dbReference type="Pfam" id="PF02390">
    <property type="entry name" value="Methyltransf_4"/>
    <property type="match status" value="1"/>
</dbReference>
<dbReference type="SUPFAM" id="SSF53335">
    <property type="entry name" value="S-adenosyl-L-methionine-dependent methyltransferases"/>
    <property type="match status" value="1"/>
</dbReference>
<dbReference type="PROSITE" id="PS51625">
    <property type="entry name" value="SAM_MT_TRMB"/>
    <property type="match status" value="1"/>
</dbReference>